<sequence>MSYIQKQGKNTAWRVALMRNLTSELIVSERLEITETRAKELRKHLDKMVTLAKRGDLHARRQAASWLRNIEASSKEDVLQKLFTTIAKKYKDRDGGYTRILKLDNRKGDNAPMVIIELV</sequence>
<proteinExistence type="inferred from homology"/>
<name>RL17_MESFL</name>
<comment type="subunit">
    <text evidence="1">Part of the 50S ribosomal subunit. Contacts protein L32.</text>
</comment>
<comment type="similarity">
    <text evidence="1">Belongs to the bacterial ribosomal protein bL17 family.</text>
</comment>
<gene>
    <name evidence="1" type="primary">rplQ</name>
    <name type="ordered locus">Mfl151</name>
</gene>
<evidence type="ECO:0000255" key="1">
    <source>
        <dbReference type="HAMAP-Rule" id="MF_01368"/>
    </source>
</evidence>
<evidence type="ECO:0000305" key="2"/>
<organism>
    <name type="scientific">Mesoplasma florum (strain ATCC 33453 / NBRC 100688 / NCTC 11704 / L1)</name>
    <name type="common">Acholeplasma florum</name>
    <dbReference type="NCBI Taxonomy" id="265311"/>
    <lineage>
        <taxon>Bacteria</taxon>
        <taxon>Bacillati</taxon>
        <taxon>Mycoplasmatota</taxon>
        <taxon>Mollicutes</taxon>
        <taxon>Entomoplasmatales</taxon>
        <taxon>Entomoplasmataceae</taxon>
        <taxon>Mesoplasma</taxon>
    </lineage>
</organism>
<accession>Q6F1W6</accession>
<reference key="1">
    <citation type="submission" date="2004-06" db="EMBL/GenBank/DDBJ databases">
        <authorList>
            <person name="Birren B.W."/>
            <person name="Stange-Thomann N."/>
            <person name="Hafez N."/>
            <person name="DeCaprio D."/>
            <person name="Fisher S."/>
            <person name="Butler J."/>
            <person name="Elkins T."/>
            <person name="Kodira C.D."/>
            <person name="Major J."/>
            <person name="Wang S."/>
            <person name="Nicol R."/>
            <person name="Nusbaum C."/>
        </authorList>
    </citation>
    <scope>NUCLEOTIDE SEQUENCE [LARGE SCALE GENOMIC DNA]</scope>
    <source>
        <strain>ATCC 33453 / NBRC 100688 / NCTC 11704 / L1</strain>
    </source>
</reference>
<protein>
    <recommendedName>
        <fullName evidence="1">Large ribosomal subunit protein bL17</fullName>
    </recommendedName>
    <alternativeName>
        <fullName evidence="2">50S ribosomal protein L17</fullName>
    </alternativeName>
</protein>
<keyword id="KW-1185">Reference proteome</keyword>
<keyword id="KW-0687">Ribonucleoprotein</keyword>
<keyword id="KW-0689">Ribosomal protein</keyword>
<feature type="chain" id="PRO_1000055869" description="Large ribosomal subunit protein bL17">
    <location>
        <begin position="1"/>
        <end position="119"/>
    </location>
</feature>
<dbReference type="EMBL" id="AE017263">
    <property type="protein sequence ID" value="AAT75507.1"/>
    <property type="molecule type" value="Genomic_DNA"/>
</dbReference>
<dbReference type="RefSeq" id="WP_011183048.1">
    <property type="nucleotide sequence ID" value="NC_006055.1"/>
</dbReference>
<dbReference type="RefSeq" id="YP_053391.1">
    <property type="nucleotide sequence ID" value="NC_006055.1"/>
</dbReference>
<dbReference type="SMR" id="Q6F1W6"/>
<dbReference type="STRING" id="265311.Mfl151"/>
<dbReference type="PaxDb" id="265311-Mfl151"/>
<dbReference type="EnsemblBacteria" id="AAT75507">
    <property type="protein sequence ID" value="AAT75507"/>
    <property type="gene ID" value="Mfl151"/>
</dbReference>
<dbReference type="GeneID" id="2897829"/>
<dbReference type="KEGG" id="mfl:Mfl151"/>
<dbReference type="PATRIC" id="fig|265311.5.peg.152"/>
<dbReference type="eggNOG" id="COG0203">
    <property type="taxonomic scope" value="Bacteria"/>
</dbReference>
<dbReference type="HOGENOM" id="CLU_074407_2_2_14"/>
<dbReference type="OrthoDB" id="9809073at2"/>
<dbReference type="Proteomes" id="UP000006647">
    <property type="component" value="Chromosome"/>
</dbReference>
<dbReference type="GO" id="GO:0022625">
    <property type="term" value="C:cytosolic large ribosomal subunit"/>
    <property type="evidence" value="ECO:0007669"/>
    <property type="project" value="TreeGrafter"/>
</dbReference>
<dbReference type="GO" id="GO:0003735">
    <property type="term" value="F:structural constituent of ribosome"/>
    <property type="evidence" value="ECO:0007669"/>
    <property type="project" value="InterPro"/>
</dbReference>
<dbReference type="GO" id="GO:0006412">
    <property type="term" value="P:translation"/>
    <property type="evidence" value="ECO:0007669"/>
    <property type="project" value="UniProtKB-UniRule"/>
</dbReference>
<dbReference type="Gene3D" id="3.90.1030.10">
    <property type="entry name" value="Ribosomal protein L17"/>
    <property type="match status" value="1"/>
</dbReference>
<dbReference type="HAMAP" id="MF_01368">
    <property type="entry name" value="Ribosomal_bL17"/>
    <property type="match status" value="1"/>
</dbReference>
<dbReference type="InterPro" id="IPR000456">
    <property type="entry name" value="Ribosomal_bL17"/>
</dbReference>
<dbReference type="InterPro" id="IPR036373">
    <property type="entry name" value="Ribosomal_bL17_sf"/>
</dbReference>
<dbReference type="NCBIfam" id="TIGR00059">
    <property type="entry name" value="L17"/>
    <property type="match status" value="1"/>
</dbReference>
<dbReference type="PANTHER" id="PTHR14413:SF16">
    <property type="entry name" value="LARGE RIBOSOMAL SUBUNIT PROTEIN BL17M"/>
    <property type="match status" value="1"/>
</dbReference>
<dbReference type="PANTHER" id="PTHR14413">
    <property type="entry name" value="RIBOSOMAL PROTEIN L17"/>
    <property type="match status" value="1"/>
</dbReference>
<dbReference type="Pfam" id="PF01196">
    <property type="entry name" value="Ribosomal_L17"/>
    <property type="match status" value="1"/>
</dbReference>
<dbReference type="SUPFAM" id="SSF64263">
    <property type="entry name" value="Prokaryotic ribosomal protein L17"/>
    <property type="match status" value="1"/>
</dbReference>